<name>CYCF_CLITE</name>
<organism>
    <name type="scientific">Clitoria ternatea</name>
    <name type="common">Butterfly pea</name>
    <dbReference type="NCBI Taxonomy" id="43366"/>
    <lineage>
        <taxon>Eukaryota</taxon>
        <taxon>Viridiplantae</taxon>
        <taxon>Streptophyta</taxon>
        <taxon>Embryophyta</taxon>
        <taxon>Tracheophyta</taxon>
        <taxon>Spermatophyta</taxon>
        <taxon>Magnoliopsida</taxon>
        <taxon>eudicotyledons</taxon>
        <taxon>Gunneridae</taxon>
        <taxon>Pentapetalae</taxon>
        <taxon>rosids</taxon>
        <taxon>fabids</taxon>
        <taxon>Fabales</taxon>
        <taxon>Fabaceae</taxon>
        <taxon>Papilionoideae</taxon>
        <taxon>50 kb inversion clade</taxon>
        <taxon>NPAAA clade</taxon>
        <taxon>indigoferoid/millettioid clade</taxon>
        <taxon>Phaseoleae</taxon>
        <taxon>Clitoria</taxon>
    </lineage>
</organism>
<reference evidence="5" key="1">
    <citation type="journal article" date="2011" name="ACS Chem. Biol.">
        <title>The discovery of cyclotides in the Fabaceae plant family provides new insights into the cyclization, evolution and distribution of circular proteins.</title>
        <authorList>
            <person name="Poth A.G."/>
            <person name="Colgrave M.L."/>
            <person name="Philip R."/>
            <person name="Kerenga B."/>
            <person name="Daly N.L."/>
            <person name="Anderson M."/>
            <person name="Craik D.J."/>
        </authorList>
    </citation>
    <scope>PROTEIN SEQUENCE</scope>
    <scope>DISULFIDE BONDS</scope>
    <scope>CYCLIZATION</scope>
    <scope>MASS SPECTROMETRY</scope>
    <source>
        <tissue evidence="3">Seed</tissue>
    </source>
</reference>
<protein>
    <recommendedName>
        <fullName evidence="4">Cyclotide cter-F</fullName>
    </recommendedName>
</protein>
<keyword id="KW-0903">Direct protein sequencing</keyword>
<keyword id="KW-1015">Disulfide bond</keyword>
<keyword id="KW-0960">Knottin</keyword>
<keyword id="KW-0611">Plant defense</keyword>
<proteinExistence type="evidence at protein level"/>
<feature type="peptide" id="PRO_0000405857" description="Cyclotide cter-F" evidence="2 3">
    <location>
        <begin position="1"/>
        <end position="30"/>
    </location>
</feature>
<feature type="disulfide bond" evidence="1 2">
    <location>
        <begin position="4"/>
        <end position="20"/>
    </location>
</feature>
<feature type="disulfide bond" evidence="1 2">
    <location>
        <begin position="8"/>
        <end position="22"/>
    </location>
</feature>
<feature type="disulfide bond" evidence="1 2">
    <location>
        <begin position="13"/>
        <end position="27"/>
    </location>
</feature>
<feature type="cross-link" description="Cyclopeptide (Gly-Asp)" evidence="4">
    <location>
        <begin position="1"/>
        <end position="30"/>
    </location>
</feature>
<accession>P86846</accession>
<sequence>GIPCGESCVFIPCISSVVGCSCKSKVCYLD</sequence>
<dbReference type="SMR" id="P86846"/>
<dbReference type="GO" id="GO:0006952">
    <property type="term" value="P:defense response"/>
    <property type="evidence" value="ECO:0007669"/>
    <property type="project" value="UniProtKB-KW"/>
</dbReference>
<dbReference type="InterPro" id="IPR005535">
    <property type="entry name" value="Cyclotide"/>
</dbReference>
<dbReference type="InterPro" id="IPR012323">
    <property type="entry name" value="Cyclotide_bracelet_CS"/>
</dbReference>
<dbReference type="InterPro" id="IPR036146">
    <property type="entry name" value="Cyclotide_sf"/>
</dbReference>
<dbReference type="Pfam" id="PF03784">
    <property type="entry name" value="Cyclotide"/>
    <property type="match status" value="1"/>
</dbReference>
<dbReference type="PIRSF" id="PIRSF037891">
    <property type="entry name" value="Cycloviolacin"/>
    <property type="match status" value="1"/>
</dbReference>
<dbReference type="SUPFAM" id="SSF57038">
    <property type="entry name" value="Cyclotides"/>
    <property type="match status" value="1"/>
</dbReference>
<dbReference type="PROSITE" id="PS51052">
    <property type="entry name" value="CYCLOTIDE"/>
    <property type="match status" value="1"/>
</dbReference>
<dbReference type="PROSITE" id="PS60008">
    <property type="entry name" value="CYCLOTIDE_BRACELET"/>
    <property type="match status" value="1"/>
</dbReference>
<evidence type="ECO:0000250" key="1">
    <source>
        <dbReference type="UniProtKB" id="P56254"/>
    </source>
</evidence>
<evidence type="ECO:0000255" key="2">
    <source>
        <dbReference type="PROSITE-ProRule" id="PRU00395"/>
    </source>
</evidence>
<evidence type="ECO:0000269" key="3">
    <source>
    </source>
</evidence>
<evidence type="ECO:0000303" key="4">
    <source>
    </source>
</evidence>
<evidence type="ECO:0000305" key="5"/>
<comment type="function">
    <text evidence="1 2">Probably participates in a plant defense mechanism.</text>
</comment>
<comment type="domain">
    <text evidence="5">The presence of a 'disulfide through disulfide knot' structurally defines this protein as a knottin.</text>
</comment>
<comment type="PTM">
    <text evidence="3">Contains 3 disulfide bonds.</text>
</comment>
<comment type="PTM">
    <text evidence="2 3">This is a cyclic peptide.</text>
</comment>
<comment type="mass spectrometry"/>
<comment type="similarity">
    <text evidence="2">Belongs to the cyclotide family. Bracelet subfamily.</text>
</comment>
<comment type="caution">
    <text evidence="5">This peptide is cyclic. The start position was chosen by similarity to cyclotide cter-A for which the DNA sequence is known.</text>
</comment>